<evidence type="ECO:0000255" key="1"/>
<evidence type="ECO:0000256" key="2">
    <source>
        <dbReference type="SAM" id="MobiDB-lite"/>
    </source>
</evidence>
<evidence type="ECO:0000305" key="3"/>
<accession>P15711</accession>
<accession>Q4N2B5</accession>
<dbReference type="EMBL" id="M29954">
    <property type="protein sequence ID" value="AAA18217.1"/>
    <property type="molecule type" value="Unassigned_DNA"/>
</dbReference>
<dbReference type="EMBL" id="AAGK01000004">
    <property type="protein sequence ID" value="EAN31789.1"/>
    <property type="molecule type" value="Genomic_DNA"/>
</dbReference>
<dbReference type="PIR" id="A44945">
    <property type="entry name" value="A44945"/>
</dbReference>
<dbReference type="STRING" id="5875.P15711"/>
<dbReference type="EnsemblProtists" id="EAN31789">
    <property type="protein sequence ID" value="EAN31789"/>
    <property type="gene ID" value="TP04_0437"/>
</dbReference>
<dbReference type="GeneID" id="3500484"/>
<dbReference type="KEGG" id="tpv:TP04_0437"/>
<dbReference type="VEuPathDB" id="PiroplasmaDB:TpMuguga_04g00437"/>
<dbReference type="InParanoid" id="P15711"/>
<dbReference type="OMA" id="NGHICKM"/>
<dbReference type="Proteomes" id="UP000001949">
    <property type="component" value="Unassembled WGS sequence"/>
</dbReference>
<dbReference type="GO" id="GO:0005886">
    <property type="term" value="C:plasma membrane"/>
    <property type="evidence" value="ECO:0007669"/>
    <property type="project" value="UniProtKB-SubCell"/>
</dbReference>
<dbReference type="GO" id="GO:0098552">
    <property type="term" value="C:side of membrane"/>
    <property type="evidence" value="ECO:0007669"/>
    <property type="project" value="UniProtKB-KW"/>
</dbReference>
<dbReference type="PANTHER" id="PTHR24216:SF65">
    <property type="entry name" value="PAXILLIN-LIKE PROTEIN 1"/>
    <property type="match status" value="1"/>
</dbReference>
<dbReference type="PANTHER" id="PTHR24216">
    <property type="entry name" value="PAXILLIN-RELATED"/>
    <property type="match status" value="1"/>
</dbReference>
<dbReference type="PRINTS" id="PR01217">
    <property type="entry name" value="PRICHEXTENSN"/>
</dbReference>
<proteinExistence type="evidence at transcript level"/>
<keyword id="KW-1003">Cell membrane</keyword>
<keyword id="KW-0325">Glycoprotein</keyword>
<keyword id="KW-0336">GPI-anchor</keyword>
<keyword id="KW-0449">Lipoprotein</keyword>
<keyword id="KW-0472">Membrane</keyword>
<keyword id="KW-1185">Reference proteome</keyword>
<keyword id="KW-0677">Repeat</keyword>
<keyword id="KW-0732">Signal</keyword>
<keyword id="KW-0748">Sporozoite</keyword>
<feature type="signal peptide" evidence="1">
    <location>
        <begin position="1"/>
        <end position="19"/>
    </location>
</feature>
<feature type="chain" id="PRO_0000046081" description="104 kDa microneme/rhoptry antigen">
    <location>
        <begin position="20"/>
        <end position="904"/>
    </location>
</feature>
<feature type="propeptide" id="PRO_0000232679" description="Removed in mature form" evidence="1">
    <location>
        <begin position="905"/>
        <end position="924"/>
    </location>
</feature>
<feature type="region of interest" description="Disordered" evidence="2">
    <location>
        <begin position="490"/>
        <end position="907"/>
    </location>
</feature>
<feature type="compositionally biased region" description="Basic and acidic residues" evidence="2">
    <location>
        <begin position="522"/>
        <end position="532"/>
    </location>
</feature>
<feature type="compositionally biased region" description="Basic and acidic residues" evidence="2">
    <location>
        <begin position="573"/>
        <end position="588"/>
    </location>
</feature>
<feature type="compositionally biased region" description="Low complexity" evidence="2">
    <location>
        <begin position="592"/>
        <end position="617"/>
    </location>
</feature>
<feature type="compositionally biased region" description="Basic and acidic residues" evidence="2">
    <location>
        <begin position="653"/>
        <end position="673"/>
    </location>
</feature>
<feature type="compositionally biased region" description="Low complexity" evidence="2">
    <location>
        <begin position="724"/>
        <end position="736"/>
    </location>
</feature>
<feature type="compositionally biased region" description="Basic and acidic residues" evidence="2">
    <location>
        <begin position="737"/>
        <end position="747"/>
    </location>
</feature>
<feature type="compositionally biased region" description="Basic and acidic residues" evidence="2">
    <location>
        <begin position="770"/>
        <end position="783"/>
    </location>
</feature>
<feature type="compositionally biased region" description="Basic and acidic residues" evidence="2">
    <location>
        <begin position="816"/>
        <end position="825"/>
    </location>
</feature>
<feature type="compositionally biased region" description="Acidic residues" evidence="2">
    <location>
        <begin position="857"/>
        <end position="867"/>
    </location>
</feature>
<feature type="compositionally biased region" description="Basic and acidic residues" evidence="2">
    <location>
        <begin position="868"/>
        <end position="878"/>
    </location>
</feature>
<feature type="compositionally biased region" description="Basic residues" evidence="2">
    <location>
        <begin position="879"/>
        <end position="901"/>
    </location>
</feature>
<feature type="lipid moiety-binding region" description="GPI-anchor amidated aspartate" evidence="1">
    <location>
        <position position="904"/>
    </location>
</feature>
<protein>
    <recommendedName>
        <fullName>104 kDa microneme/rhoptry antigen</fullName>
    </recommendedName>
    <alternativeName>
        <fullName>p104</fullName>
    </alternativeName>
</protein>
<reference key="1">
    <citation type="journal article" date="1990" name="Mol. Biochem. Parasitol.">
        <title>Characterisation of the gene encoding a 104-kilodalton microneme-rhoptry protein of Theileria parva.</title>
        <authorList>
            <person name="Iams K.P."/>
            <person name="Young J.R."/>
            <person name="Nene V."/>
            <person name="Desai J."/>
            <person name="Webster P."/>
            <person name="Ole-Moiyoi O.K."/>
            <person name="Musoke A.J."/>
        </authorList>
    </citation>
    <scope>NUCLEOTIDE SEQUENCE [GENOMIC DNA]</scope>
    <source>
        <strain>Muguga</strain>
    </source>
</reference>
<reference key="2">
    <citation type="journal article" date="2005" name="Science">
        <title>Genome sequence of Theileria parva, a bovine pathogen that transforms lymphocytes.</title>
        <authorList>
            <person name="Gardner M.J."/>
            <person name="Bishop R."/>
            <person name="Shah T."/>
            <person name="de Villiers E.P."/>
            <person name="Carlton J.M."/>
            <person name="Hall N."/>
            <person name="Ren Q."/>
            <person name="Paulsen I.T."/>
            <person name="Pain A."/>
            <person name="Berriman M."/>
            <person name="Wilson R.J.M."/>
            <person name="Sato S."/>
            <person name="Ralph S.A."/>
            <person name="Mann D.J."/>
            <person name="Xiong Z."/>
            <person name="Shallom S.J."/>
            <person name="Weidman J."/>
            <person name="Jiang L."/>
            <person name="Lynn J."/>
            <person name="Weaver B."/>
            <person name="Shoaibi A."/>
            <person name="Domingo A.R."/>
            <person name="Wasawo D."/>
            <person name="Crabtree J."/>
            <person name="Wortman J.R."/>
            <person name="Haas B."/>
            <person name="Angiuoli S.V."/>
            <person name="Creasy T.H."/>
            <person name="Lu C."/>
            <person name="Suh B."/>
            <person name="Silva J.C."/>
            <person name="Utterback T.R."/>
            <person name="Feldblyum T.V."/>
            <person name="Pertea M."/>
            <person name="Allen J."/>
            <person name="Nierman W.C."/>
            <person name="Taracha E.L.N."/>
            <person name="Salzberg S.L."/>
            <person name="White O.R."/>
            <person name="Fitzhugh H.A."/>
            <person name="Morzaria S."/>
            <person name="Venter J.C."/>
            <person name="Fraser C.M."/>
            <person name="Nene V."/>
        </authorList>
    </citation>
    <scope>NUCLEOTIDE SEQUENCE [LARGE SCALE GENOMIC DNA]</scope>
    <source>
        <strain>Muguga</strain>
    </source>
</reference>
<gene>
    <name type="ordered locus">TP04_0437</name>
</gene>
<sequence>MKFLILLFNILCLFPVLAADNHGVGPQGASGVDPITFDINSNQTGPAFLTAVEMAGVKYLQVQHGSNVNIHRLVEGNVVIWENASTPLYTGAIVTNNDGPYMAYVEVLGDPNLQFFIKSGDAWVTLSEHEYLAKLQEIRQAVHIESVFSLNMAFQLENNKYEVETHAKNGANMVTFIPRNGHICKMVYHKNVRIYKATGNDTVTSVVGFFRGLRLLLINVFSIDDNGMMSNRYFQHVDDKYVPISQKNYETGIVKLKDYKHAYHPVDLDIKDIDYTMFHLADATYHEPCFKIIPNTGFCITKLFDGDQVLYESFNPLIHCINEVHIYDRNNGSIICLHLNYSPPSYKAYLVLKDTGWEATTHPLLEEKIEELQDQRACELDVNFISDKDLYVAALTNADLNYTMVTPRPHRDVIRVSDGSEVLWYYEGLDNFLVCAWIYVSDGVASLVHLRIKDRIPANNDIYVLKGDLYWTRITKIQFTQEIKRLVKKSKKKLAPITEEDSDKHDEPPEGPGASGLPPKAPGDKEGSEGHKGPSKGSDSSKEGKKPGSGKKPGPAREHKPSKIPTLSKKPSGPKDPKHPRDPKEPRKSKSPRTASPTRRPSPKLPQLSKLPKSTSPRSPPPPTRPSSPERPEGTKIIKTSKPPSPKPPFDPSFKEKFYDDYSKAASRSKETKTTVVLDESFESILKETLPETPGTPFTTPRPVPPKRPRTPESPFEPPKDPDSPSTSPSEFFTPPESKRTRFHETPADTPLPDVTAELFKEPDVTAETKSPDEAMKRPRSPSEYEDTSPGDYPSLPMKRHRLERLRLTTTEMETDPGRMAKDASGKPVKLKRSKSFDDLTTVELAPEPKASRIVVDDEGTEADDEETHPPEERQKTEVRRRRPPKKPSKSPRPSKPKKPKKPDSAYIPSILAILVVSLIVGIL</sequence>
<comment type="subcellular location">
    <subcellularLocation>
        <location evidence="3">Cell membrane</location>
        <topology evidence="3">Lipid-anchor</topology>
        <topology evidence="3">GPI-anchor</topology>
    </subcellularLocation>
    <text>In microneme/rhoptry complexes.</text>
</comment>
<comment type="developmental stage">
    <text>Sporozoite antigen.</text>
</comment>
<organism>
    <name type="scientific">Theileria parva</name>
    <name type="common">East coast fever infection agent</name>
    <dbReference type="NCBI Taxonomy" id="5875"/>
    <lineage>
        <taxon>Eukaryota</taxon>
        <taxon>Sar</taxon>
        <taxon>Alveolata</taxon>
        <taxon>Apicomplexa</taxon>
        <taxon>Aconoidasida</taxon>
        <taxon>Piroplasmida</taxon>
        <taxon>Theileriidae</taxon>
        <taxon>Theileria</taxon>
    </lineage>
</organism>
<name>104K_THEPA</name>